<organism>
    <name type="scientific">Oryza sativa subsp. japonica</name>
    <name type="common">Rice</name>
    <dbReference type="NCBI Taxonomy" id="39947"/>
    <lineage>
        <taxon>Eukaryota</taxon>
        <taxon>Viridiplantae</taxon>
        <taxon>Streptophyta</taxon>
        <taxon>Embryophyta</taxon>
        <taxon>Tracheophyta</taxon>
        <taxon>Spermatophyta</taxon>
        <taxon>Magnoliopsida</taxon>
        <taxon>Liliopsida</taxon>
        <taxon>Poales</taxon>
        <taxon>Poaceae</taxon>
        <taxon>BOP clade</taxon>
        <taxon>Oryzoideae</taxon>
        <taxon>Oryzeae</taxon>
        <taxon>Oryzinae</taxon>
        <taxon>Oryza</taxon>
        <taxon>Oryza sativa</taxon>
    </lineage>
</organism>
<reference key="1">
    <citation type="journal article" date="1999" name="Mol. Plant Microbe Interact.">
        <title>BWMK1, a novel MAP kinase induced by fungal infection and mechanical wounding in rice.</title>
        <authorList>
            <person name="He C."/>
            <person name="Fong S.H.T."/>
            <person name="Yang D."/>
            <person name="Wang G.-L."/>
        </authorList>
    </citation>
    <scope>NUCLEOTIDE SEQUENCE [MRNA] (ISOFORM 1)</scope>
    <scope>ACTIVITY REGULATION</scope>
    <scope>INDUCTION</scope>
    <scope>PHOSPHORYLATION AT THR-249 AND TYR-251</scope>
</reference>
<reference key="2">
    <citation type="journal article" date="2005" name="Nature">
        <title>The map-based sequence of the rice genome.</title>
        <authorList>
            <consortium name="International rice genome sequencing project (IRGSP)"/>
        </authorList>
    </citation>
    <scope>NUCLEOTIDE SEQUENCE [LARGE SCALE GENOMIC DNA]</scope>
    <source>
        <strain>cv. Nipponbare</strain>
    </source>
</reference>
<reference key="3">
    <citation type="journal article" date="2008" name="Nucleic Acids Res.">
        <title>The rice annotation project database (RAP-DB): 2008 update.</title>
        <authorList>
            <consortium name="The rice annotation project (RAP)"/>
        </authorList>
    </citation>
    <scope>GENOME REANNOTATION</scope>
    <source>
        <strain>cv. Nipponbare</strain>
    </source>
</reference>
<reference key="4">
    <citation type="journal article" date="2013" name="Rice">
        <title>Improvement of the Oryza sativa Nipponbare reference genome using next generation sequence and optical map data.</title>
        <authorList>
            <person name="Kawahara Y."/>
            <person name="de la Bastide M."/>
            <person name="Hamilton J.P."/>
            <person name="Kanamori H."/>
            <person name="McCombie W.R."/>
            <person name="Ouyang S."/>
            <person name="Schwartz D.C."/>
            <person name="Tanaka T."/>
            <person name="Wu J."/>
            <person name="Zhou S."/>
            <person name="Childs K.L."/>
            <person name="Davidson R.M."/>
            <person name="Lin H."/>
            <person name="Quesada-Ocampo L."/>
            <person name="Vaillancourt B."/>
            <person name="Sakai H."/>
            <person name="Lee S.S."/>
            <person name="Kim J."/>
            <person name="Numa H."/>
            <person name="Itoh T."/>
            <person name="Buell C.R."/>
            <person name="Matsumoto T."/>
        </authorList>
    </citation>
    <scope>GENOME REANNOTATION</scope>
    <source>
        <strain>cv. Nipponbare</strain>
    </source>
</reference>
<reference key="5">
    <citation type="journal article" date="2003" name="Science">
        <title>Collection, mapping, and annotation of over 28,000 cDNA clones from japonica rice.</title>
        <authorList>
            <consortium name="The rice full-length cDNA consortium"/>
        </authorList>
    </citation>
    <scope>NUCLEOTIDE SEQUENCE [LARGE SCALE MRNA] (ISOFORMS 1 AND 2)</scope>
    <source>
        <strain>cv. Nipponbare</strain>
    </source>
</reference>
<reference key="6">
    <citation type="journal article" date="2003" name="Plant Physiol.">
        <title>BWMK1, a rice mitogen-activated protein kinase, locates in the nucleus and mediates pathogenesis-related gene expression by activation of a transcription factor.</title>
        <authorList>
            <person name="Cheong Y.H."/>
            <person name="Moon B.C."/>
            <person name="Kim J.K."/>
            <person name="Kim C.Y."/>
            <person name="Kim M.C."/>
            <person name="Kim I.H."/>
            <person name="Park C.Y."/>
            <person name="Kim J.C."/>
            <person name="Park B.O."/>
            <person name="Koo S.C."/>
            <person name="Yoon H.W."/>
            <person name="Chung W.S."/>
            <person name="Lim C.O."/>
            <person name="Lee S.Y."/>
            <person name="Cho M.J."/>
        </authorList>
    </citation>
    <scope>NUCLEOTIDE SEQUENCE [MRNA] OF 37-580 (ISOFORM 1)</scope>
    <scope>FUNCTION</scope>
    <scope>ACTIVITY REGULATION</scope>
    <scope>SUBCELLULAR LOCATION</scope>
    <scope>INDUCTION</scope>
    <scope>INTERACTION WITH EREBP1</scope>
</reference>
<reference key="7">
    <citation type="journal article" date="2006" name="Mol. Plant Microbe Interact.">
        <title>Molecular analysis of the rice MAP kinase gene family in relation to Magnaporthe grisea infection.</title>
        <authorList>
            <person name="Reyna N.S."/>
            <person name="Yang Y."/>
        </authorList>
    </citation>
    <scope>INDUCTION</scope>
    <scope>NOMENCLATURE</scope>
</reference>
<feature type="chain" id="PRO_0000239755" description="Mitogen-activated protein kinase 12">
    <location>
        <begin position="1"/>
        <end position="580"/>
    </location>
</feature>
<feature type="domain" description="Protein kinase" evidence="2">
    <location>
        <begin position="87"/>
        <end position="378"/>
    </location>
</feature>
<feature type="region of interest" description="Disordered" evidence="3">
    <location>
        <begin position="18"/>
        <end position="38"/>
    </location>
</feature>
<feature type="region of interest" description="Required for kinase activity and nuclear localization">
    <location>
        <begin position="325"/>
        <end position="506"/>
    </location>
</feature>
<feature type="region of interest" description="Disordered" evidence="3">
    <location>
        <begin position="458"/>
        <end position="580"/>
    </location>
</feature>
<feature type="short sequence motif" description="TXY">
    <location>
        <begin position="249"/>
        <end position="251"/>
    </location>
</feature>
<feature type="compositionally biased region" description="Polar residues" evidence="3">
    <location>
        <begin position="20"/>
        <end position="29"/>
    </location>
</feature>
<feature type="compositionally biased region" description="Polar residues" evidence="3">
    <location>
        <begin position="502"/>
        <end position="543"/>
    </location>
</feature>
<feature type="compositionally biased region" description="Acidic residues" evidence="3">
    <location>
        <begin position="554"/>
        <end position="566"/>
    </location>
</feature>
<feature type="active site" description="Proton acceptor" evidence="2">
    <location>
        <position position="213"/>
    </location>
</feature>
<feature type="binding site" evidence="2">
    <location>
        <begin position="93"/>
        <end position="101"/>
    </location>
    <ligand>
        <name>ATP</name>
        <dbReference type="ChEBI" id="CHEBI:30616"/>
    </ligand>
</feature>
<feature type="binding site" evidence="2">
    <location>
        <position position="116"/>
    </location>
    <ligand>
        <name>ATP</name>
        <dbReference type="ChEBI" id="CHEBI:30616"/>
    </ligand>
</feature>
<feature type="modified residue" description="Phosphothreonine" evidence="9">
    <location>
        <position position="249"/>
    </location>
</feature>
<feature type="modified residue" description="Phosphotyrosine" evidence="9">
    <location>
        <position position="251"/>
    </location>
</feature>
<feature type="splice variant" id="VSP_019264" description="In isoform 2." evidence="7">
    <location>
        <begin position="1"/>
        <end position="74"/>
    </location>
</feature>
<feature type="sequence conflict" description="In Ref. 5; AK066531." evidence="8" ref="5">
    <original>Q</original>
    <variation>R</variation>
    <location>
        <position position="196"/>
    </location>
</feature>
<feature type="sequence conflict" description="In Ref. 1; AAD52659." evidence="8" ref="1">
    <original>S</original>
    <variation>P</variation>
    <location>
        <position position="367"/>
    </location>
</feature>
<gene>
    <name type="primary">MPK12</name>
    <name type="synonym">BWMK1</name>
    <name type="synonym">MAPK1</name>
    <name type="ordered locus">Os06g0708000</name>
    <name type="ordered locus">LOC_Os06g49430</name>
    <name type="ORF">P0621D05.40-1</name>
    <name type="ORF">P0621D05.40-2</name>
</gene>
<dbReference type="EC" id="2.7.11.24"/>
<dbReference type="EMBL" id="AF177392">
    <property type="protein sequence ID" value="AAD52659.1"/>
    <property type="molecule type" value="mRNA"/>
</dbReference>
<dbReference type="EMBL" id="AP003621">
    <property type="protein sequence ID" value="BAD53616.1"/>
    <property type="molecule type" value="Genomic_DNA"/>
</dbReference>
<dbReference type="EMBL" id="AP003621">
    <property type="protein sequence ID" value="BAD53617.1"/>
    <property type="molecule type" value="Genomic_DNA"/>
</dbReference>
<dbReference type="EMBL" id="AP008212">
    <property type="protein sequence ID" value="BAF20444.1"/>
    <property type="molecule type" value="Genomic_DNA"/>
</dbReference>
<dbReference type="EMBL" id="AP014962">
    <property type="protein sequence ID" value="BAS99425.1"/>
    <property type="molecule type" value="Genomic_DNA"/>
</dbReference>
<dbReference type="EMBL" id="AK066531">
    <property type="status" value="NOT_ANNOTATED_CDS"/>
    <property type="molecule type" value="mRNA"/>
</dbReference>
<dbReference type="EMBL" id="AK067925">
    <property type="status" value="NOT_ANNOTATED_CDS"/>
    <property type="molecule type" value="mRNA"/>
</dbReference>
<dbReference type="EMBL" id="AF194415">
    <property type="protein sequence ID" value="AAF23902.1"/>
    <property type="status" value="ALT_INIT"/>
    <property type="molecule type" value="mRNA"/>
</dbReference>
<dbReference type="RefSeq" id="XP_015643068.1">
    <property type="nucleotide sequence ID" value="XM_015787582.1"/>
</dbReference>
<dbReference type="SMR" id="Q5Z9J0"/>
<dbReference type="BioGRID" id="811054">
    <property type="interactions" value="2"/>
</dbReference>
<dbReference type="FunCoup" id="Q5Z9J0">
    <property type="interactions" value="504"/>
</dbReference>
<dbReference type="STRING" id="39947.Q5Z9J0"/>
<dbReference type="iPTMnet" id="Q5Z9J0"/>
<dbReference type="PaxDb" id="39947-Q5Z9J0"/>
<dbReference type="EnsemblPlants" id="Os06t0708000-01">
    <molecule id="Q5Z9J0-1"/>
    <property type="protein sequence ID" value="Os06t0708000-01"/>
    <property type="gene ID" value="Os06g0708000"/>
</dbReference>
<dbReference type="Gramene" id="Os06t0708000-01">
    <molecule id="Q5Z9J0-1"/>
    <property type="protein sequence ID" value="Os06t0708000-01"/>
    <property type="gene ID" value="Os06g0708000"/>
</dbReference>
<dbReference type="KEGG" id="dosa:Os06g0708000"/>
<dbReference type="eggNOG" id="KOG0660">
    <property type="taxonomic scope" value="Eukaryota"/>
</dbReference>
<dbReference type="InParanoid" id="Q5Z9J0"/>
<dbReference type="OMA" id="RNDEMIN"/>
<dbReference type="OrthoDB" id="2396at2759"/>
<dbReference type="PRO" id="PR:Q5Z9J0"/>
<dbReference type="Proteomes" id="UP000000763">
    <property type="component" value="Chromosome 6"/>
</dbReference>
<dbReference type="Proteomes" id="UP000059680">
    <property type="component" value="Chromosome 6"/>
</dbReference>
<dbReference type="GO" id="GO:0005737">
    <property type="term" value="C:cytoplasm"/>
    <property type="evidence" value="ECO:0000318"/>
    <property type="project" value="GO_Central"/>
</dbReference>
<dbReference type="GO" id="GO:0005634">
    <property type="term" value="C:nucleus"/>
    <property type="evidence" value="ECO:0000318"/>
    <property type="project" value="GO_Central"/>
</dbReference>
<dbReference type="GO" id="GO:0005524">
    <property type="term" value="F:ATP binding"/>
    <property type="evidence" value="ECO:0007669"/>
    <property type="project" value="UniProtKB-KW"/>
</dbReference>
<dbReference type="GO" id="GO:0004707">
    <property type="term" value="F:MAP kinase activity"/>
    <property type="evidence" value="ECO:0007669"/>
    <property type="project" value="UniProtKB-EC"/>
</dbReference>
<dbReference type="GO" id="GO:0106310">
    <property type="term" value="F:protein serine kinase activity"/>
    <property type="evidence" value="ECO:0007669"/>
    <property type="project" value="RHEA"/>
</dbReference>
<dbReference type="GO" id="GO:0004674">
    <property type="term" value="F:protein serine/threonine kinase activity"/>
    <property type="evidence" value="ECO:0000318"/>
    <property type="project" value="GO_Central"/>
</dbReference>
<dbReference type="GO" id="GO:0006952">
    <property type="term" value="P:defense response"/>
    <property type="evidence" value="ECO:0007669"/>
    <property type="project" value="UniProtKB-KW"/>
</dbReference>
<dbReference type="GO" id="GO:0035556">
    <property type="term" value="P:intracellular signal transduction"/>
    <property type="evidence" value="ECO:0000318"/>
    <property type="project" value="GO_Central"/>
</dbReference>
<dbReference type="CDD" id="cd07859">
    <property type="entry name" value="STKc_TDY_MAPK"/>
    <property type="match status" value="1"/>
</dbReference>
<dbReference type="FunFam" id="1.10.510.10:FF:000017">
    <property type="entry name" value="Mitogen-activated protein kinase"/>
    <property type="match status" value="1"/>
</dbReference>
<dbReference type="FunFam" id="3.30.200.20:FF:000046">
    <property type="entry name" value="Mitogen-activated protein kinase"/>
    <property type="match status" value="1"/>
</dbReference>
<dbReference type="FunFam" id="3.30.200.20:FF:000578">
    <property type="entry name" value="Mitogen-activated protein kinase"/>
    <property type="match status" value="1"/>
</dbReference>
<dbReference type="Gene3D" id="3.30.200.20">
    <property type="entry name" value="Phosphorylase Kinase, domain 1"/>
    <property type="match status" value="1"/>
</dbReference>
<dbReference type="Gene3D" id="1.10.510.10">
    <property type="entry name" value="Transferase(Phosphotransferase) domain 1"/>
    <property type="match status" value="1"/>
</dbReference>
<dbReference type="InterPro" id="IPR011009">
    <property type="entry name" value="Kinase-like_dom_sf"/>
</dbReference>
<dbReference type="InterPro" id="IPR050117">
    <property type="entry name" value="MAP_kinase"/>
</dbReference>
<dbReference type="InterPro" id="IPR003527">
    <property type="entry name" value="MAP_kinase_CS"/>
</dbReference>
<dbReference type="InterPro" id="IPR000719">
    <property type="entry name" value="Prot_kinase_dom"/>
</dbReference>
<dbReference type="InterPro" id="IPR017441">
    <property type="entry name" value="Protein_kinase_ATP_BS"/>
</dbReference>
<dbReference type="PANTHER" id="PTHR24055">
    <property type="entry name" value="MITOGEN-ACTIVATED PROTEIN KINASE"/>
    <property type="match status" value="1"/>
</dbReference>
<dbReference type="Pfam" id="PF00069">
    <property type="entry name" value="Pkinase"/>
    <property type="match status" value="1"/>
</dbReference>
<dbReference type="SMART" id="SM00220">
    <property type="entry name" value="S_TKc"/>
    <property type="match status" value="1"/>
</dbReference>
<dbReference type="SUPFAM" id="SSF56112">
    <property type="entry name" value="Protein kinase-like (PK-like)"/>
    <property type="match status" value="1"/>
</dbReference>
<dbReference type="PROSITE" id="PS01351">
    <property type="entry name" value="MAPK"/>
    <property type="match status" value="1"/>
</dbReference>
<dbReference type="PROSITE" id="PS00107">
    <property type="entry name" value="PROTEIN_KINASE_ATP"/>
    <property type="match status" value="1"/>
</dbReference>
<dbReference type="PROSITE" id="PS50011">
    <property type="entry name" value="PROTEIN_KINASE_DOM"/>
    <property type="match status" value="1"/>
</dbReference>
<sequence length="580" mass="65945">MGGGGTLVDGFRRLFHRRTASGSNQSSNAGEEAASSDLEVADDPDLVALRSIRIRVPKRKMPLPVESHKKNTVEMEFFTEYGEASQYQIQEVIGKGSYGVVAAAVDTRTGERVAIKKINDVFEHVSDATRILREIKLLRLLRHPDIVEIKHIMLPPSRREFQDIYVVFELMESDLHQVIRANDDLTPEHYQFFLYQLLRALKYIHAANVFHRDLKPKNILANSDCKLKICDFGLARASFNDAPSAIFWTDYVATRWYRAPELCGSFFSKYTPAIDIWSIGCIFAELLTGRPLFPGKNVVHQLDIITDLLGTPSSETLSRIRNEKARRYLSTMRKKHAVPFSQKFRNTDPLALRLLERLLAFDPKDRSSAEEALADPYFASLANVEREPSRHPISKLEFEFERRKLTKDDVRELIYREILEYHPQMLQEYMKGGEQISFLYPSGVDRFKRQFAHLEENYSKGERGSPLQRKHASLPRERVGVSKDGYNQQNTNDQERSADSVARTTVSPPMSQDAQQHGSAGQNGVTSTDLSSRSYLKSASISASKCVAVKDNKEPEDDYISEEMEGSVDGLSEQVSRMHS</sequence>
<comment type="function">
    <text evidence="5">May be involved in defense signaling pathway. Phosphorylates EREBP1 transcriptional activator in vitro. Enhances DNA-binding activity of EREBP1 to the GCC box element of pathogenesis-related (PR) gene promoters.</text>
</comment>
<comment type="catalytic activity">
    <reaction>
        <text>L-seryl-[protein] + ATP = O-phospho-L-seryl-[protein] + ADP + H(+)</text>
        <dbReference type="Rhea" id="RHEA:17989"/>
        <dbReference type="Rhea" id="RHEA-COMP:9863"/>
        <dbReference type="Rhea" id="RHEA-COMP:11604"/>
        <dbReference type="ChEBI" id="CHEBI:15378"/>
        <dbReference type="ChEBI" id="CHEBI:29999"/>
        <dbReference type="ChEBI" id="CHEBI:30616"/>
        <dbReference type="ChEBI" id="CHEBI:83421"/>
        <dbReference type="ChEBI" id="CHEBI:456216"/>
        <dbReference type="EC" id="2.7.11.24"/>
    </reaction>
</comment>
<comment type="catalytic activity">
    <reaction>
        <text>L-threonyl-[protein] + ATP = O-phospho-L-threonyl-[protein] + ADP + H(+)</text>
        <dbReference type="Rhea" id="RHEA:46608"/>
        <dbReference type="Rhea" id="RHEA-COMP:11060"/>
        <dbReference type="Rhea" id="RHEA-COMP:11605"/>
        <dbReference type="ChEBI" id="CHEBI:15378"/>
        <dbReference type="ChEBI" id="CHEBI:30013"/>
        <dbReference type="ChEBI" id="CHEBI:30616"/>
        <dbReference type="ChEBI" id="CHEBI:61977"/>
        <dbReference type="ChEBI" id="CHEBI:456216"/>
        <dbReference type="EC" id="2.7.11.24"/>
    </reaction>
</comment>
<comment type="activity regulation">
    <text evidence="1 4 5">Activated by threonine and tyrosine phosphorylation (By similarity). Activated in response to hydrogen peroxide, salicylic acid, jasmonic acid, ethylene, fungal elicitor and infection with rice blast fungus (M.grisea).</text>
</comment>
<comment type="subunit">
    <text evidence="5">Interacts with EREBP1.</text>
</comment>
<comment type="subcellular location">
    <subcellularLocation>
        <location evidence="5">Cytoplasm</location>
    </subcellularLocation>
    <subcellularLocation>
        <location evidence="5">Nucleus</location>
    </subcellularLocation>
    <text evidence="8">Translocated into the nucleus in response to phosphorylation.</text>
</comment>
<comment type="alternative products">
    <event type="alternative splicing"/>
    <isoform>
        <id>Q5Z9J0-1</id>
        <name>1</name>
        <sequence type="displayed"/>
    </isoform>
    <isoform>
        <id>Q5Z9J0-2</id>
        <name>2</name>
        <sequence type="described" ref="VSP_019264"/>
    </isoform>
</comment>
<comment type="induction">
    <text evidence="4 5 6">By hydrogen peroxide, salicylic acid (SA), jasmonic acid (JA), ethylene, abscisic acid (ABA), fungal elicitor, infection with rice blast fungus (M.grisea) and wounding.</text>
</comment>
<comment type="domain">
    <text>The TXY motif contains the threonine and tyrosine residues whose phosphorylation activates the MAP kinases.</text>
</comment>
<comment type="PTM">
    <text evidence="1 4">Dually phosphorylated on Thr-249 and Tyr-251, which activates the enzyme (By similarity). Phosphorylated on tyrosine residue.</text>
</comment>
<comment type="similarity">
    <text evidence="8">Belongs to the protein kinase superfamily. CMGC Ser/Thr protein kinase family. MAP kinase subfamily.</text>
</comment>
<comment type="sequence caution" evidence="8">
    <conflict type="erroneous initiation">
        <sequence resource="EMBL-CDS" id="AAF23902"/>
    </conflict>
</comment>
<proteinExistence type="evidence at protein level"/>
<accession>Q5Z9J0</accession>
<accession>Q0D9M9</accession>
<accession>Q5Z9J1</accession>
<accession>Q9SE23</accession>
<accession>Q9SPF0</accession>
<protein>
    <recommendedName>
        <fullName>Mitogen-activated protein kinase 12</fullName>
        <shortName>MAP kinase 12</shortName>
        <ecNumber>2.7.11.24</ecNumber>
    </recommendedName>
    <alternativeName>
        <fullName>Blast- and wound-induced MAP kinase 1</fullName>
    </alternativeName>
    <alternativeName>
        <fullName>MAP kinase 1</fullName>
    </alternativeName>
    <alternativeName>
        <fullName>OsBWMK1</fullName>
    </alternativeName>
    <alternativeName>
        <fullName>OsMAPK1</fullName>
    </alternativeName>
</protein>
<name>MPK12_ORYSJ</name>
<keyword id="KW-0025">Alternative splicing</keyword>
<keyword id="KW-0067">ATP-binding</keyword>
<keyword id="KW-0963">Cytoplasm</keyword>
<keyword id="KW-0418">Kinase</keyword>
<keyword id="KW-0547">Nucleotide-binding</keyword>
<keyword id="KW-0539">Nucleus</keyword>
<keyword id="KW-0597">Phosphoprotein</keyword>
<keyword id="KW-0611">Plant defense</keyword>
<keyword id="KW-1185">Reference proteome</keyword>
<keyword id="KW-0723">Serine/threonine-protein kinase</keyword>
<keyword id="KW-0808">Transferase</keyword>
<evidence type="ECO:0000250" key="1"/>
<evidence type="ECO:0000255" key="2">
    <source>
        <dbReference type="PROSITE-ProRule" id="PRU00159"/>
    </source>
</evidence>
<evidence type="ECO:0000256" key="3">
    <source>
        <dbReference type="SAM" id="MobiDB-lite"/>
    </source>
</evidence>
<evidence type="ECO:0000269" key="4">
    <source>
    </source>
</evidence>
<evidence type="ECO:0000269" key="5">
    <source>
    </source>
</evidence>
<evidence type="ECO:0000269" key="6">
    <source>
    </source>
</evidence>
<evidence type="ECO:0000303" key="7">
    <source>
    </source>
</evidence>
<evidence type="ECO:0000305" key="8"/>
<evidence type="ECO:0000305" key="9">
    <source>
    </source>
</evidence>